<feature type="chain" id="PRO_1000216134" description="tRNA-cytidine(32) 2-sulfurtransferase">
    <location>
        <begin position="1"/>
        <end position="302"/>
    </location>
</feature>
<feature type="short sequence motif" description="PP-loop motif" evidence="1">
    <location>
        <begin position="44"/>
        <end position="49"/>
    </location>
</feature>
<feature type="binding site" evidence="1">
    <location>
        <position position="119"/>
    </location>
    <ligand>
        <name>[4Fe-4S] cluster</name>
        <dbReference type="ChEBI" id="CHEBI:49883"/>
    </ligand>
</feature>
<feature type="binding site" evidence="1">
    <location>
        <position position="122"/>
    </location>
    <ligand>
        <name>[4Fe-4S] cluster</name>
        <dbReference type="ChEBI" id="CHEBI:49883"/>
    </ligand>
</feature>
<feature type="binding site" evidence="1">
    <location>
        <position position="210"/>
    </location>
    <ligand>
        <name>[4Fe-4S] cluster</name>
        <dbReference type="ChEBI" id="CHEBI:49883"/>
    </ligand>
</feature>
<organism>
    <name type="scientific">Teredinibacter turnerae (strain ATCC 39867 / T7901)</name>
    <dbReference type="NCBI Taxonomy" id="377629"/>
    <lineage>
        <taxon>Bacteria</taxon>
        <taxon>Pseudomonadati</taxon>
        <taxon>Pseudomonadota</taxon>
        <taxon>Gammaproteobacteria</taxon>
        <taxon>Cellvibrionales</taxon>
        <taxon>Cellvibrionaceae</taxon>
        <taxon>Teredinibacter</taxon>
    </lineage>
</organism>
<sequence length="302" mass="33994">MDQLTRKNRLEFNKLQKRLRRHVGRAIADYNMIEEGDRVMVCLSGGKDSYGMLDILLSLQRTAPVKFELVAVNLDQKQPGFPEHVLPAYLDTLDIEYHIVERDTYSIVKSVVPEGKTTCGLCSRLRRGTLYGFAEKIGATKIALGHHRDDIVETLFLNLFYAGRLKAMPPKLRSDDKRNIIIRPLAYCPEEDLEAFAQARAFPIIPCNLCGSQENLQRQVIKEMLRGWDKQFPGRVETIFAALQRVSPSQLADNALFNFTDLTLDRSAPAAIEDDAPLSWSDLATTEDTTDAVNIINAVNIG</sequence>
<accession>C5BRQ7</accession>
<proteinExistence type="inferred from homology"/>
<dbReference type="EC" id="2.8.1.-" evidence="1"/>
<dbReference type="EMBL" id="CP001614">
    <property type="protein sequence ID" value="ACR14682.1"/>
    <property type="molecule type" value="Genomic_DNA"/>
</dbReference>
<dbReference type="RefSeq" id="WP_015820796.1">
    <property type="nucleotide sequence ID" value="NC_012997.1"/>
</dbReference>
<dbReference type="SMR" id="C5BRQ7"/>
<dbReference type="STRING" id="377629.TERTU_1210"/>
<dbReference type="KEGG" id="ttu:TERTU_1210"/>
<dbReference type="eggNOG" id="COG0037">
    <property type="taxonomic scope" value="Bacteria"/>
</dbReference>
<dbReference type="HOGENOM" id="CLU_026481_0_0_6"/>
<dbReference type="OrthoDB" id="9801054at2"/>
<dbReference type="Proteomes" id="UP000009080">
    <property type="component" value="Chromosome"/>
</dbReference>
<dbReference type="GO" id="GO:0005737">
    <property type="term" value="C:cytoplasm"/>
    <property type="evidence" value="ECO:0007669"/>
    <property type="project" value="UniProtKB-SubCell"/>
</dbReference>
<dbReference type="GO" id="GO:0051539">
    <property type="term" value="F:4 iron, 4 sulfur cluster binding"/>
    <property type="evidence" value="ECO:0007669"/>
    <property type="project" value="UniProtKB-UniRule"/>
</dbReference>
<dbReference type="GO" id="GO:0005524">
    <property type="term" value="F:ATP binding"/>
    <property type="evidence" value="ECO:0007669"/>
    <property type="project" value="UniProtKB-UniRule"/>
</dbReference>
<dbReference type="GO" id="GO:0000287">
    <property type="term" value="F:magnesium ion binding"/>
    <property type="evidence" value="ECO:0007669"/>
    <property type="project" value="UniProtKB-UniRule"/>
</dbReference>
<dbReference type="GO" id="GO:0016783">
    <property type="term" value="F:sulfurtransferase activity"/>
    <property type="evidence" value="ECO:0007669"/>
    <property type="project" value="UniProtKB-UniRule"/>
</dbReference>
<dbReference type="GO" id="GO:0000049">
    <property type="term" value="F:tRNA binding"/>
    <property type="evidence" value="ECO:0007669"/>
    <property type="project" value="UniProtKB-KW"/>
</dbReference>
<dbReference type="GO" id="GO:0034227">
    <property type="term" value="P:tRNA thio-modification"/>
    <property type="evidence" value="ECO:0007669"/>
    <property type="project" value="UniProtKB-UniRule"/>
</dbReference>
<dbReference type="CDD" id="cd24138">
    <property type="entry name" value="TtcA-like"/>
    <property type="match status" value="1"/>
</dbReference>
<dbReference type="Gene3D" id="3.40.50.620">
    <property type="entry name" value="HUPs"/>
    <property type="match status" value="1"/>
</dbReference>
<dbReference type="HAMAP" id="MF_01850">
    <property type="entry name" value="TtcA"/>
    <property type="match status" value="1"/>
</dbReference>
<dbReference type="InterPro" id="IPR014729">
    <property type="entry name" value="Rossmann-like_a/b/a_fold"/>
</dbReference>
<dbReference type="InterPro" id="IPR011063">
    <property type="entry name" value="TilS/TtcA_N"/>
</dbReference>
<dbReference type="InterPro" id="IPR012089">
    <property type="entry name" value="tRNA_Cyd_32_2_STrfase"/>
</dbReference>
<dbReference type="InterPro" id="IPR035107">
    <property type="entry name" value="tRNA_thiolation_TtcA_Ctu1"/>
</dbReference>
<dbReference type="NCBIfam" id="NF007972">
    <property type="entry name" value="PRK10696.1"/>
    <property type="match status" value="1"/>
</dbReference>
<dbReference type="PANTHER" id="PTHR43686:SF1">
    <property type="entry name" value="AMINOTRAN_5 DOMAIN-CONTAINING PROTEIN"/>
    <property type="match status" value="1"/>
</dbReference>
<dbReference type="PANTHER" id="PTHR43686">
    <property type="entry name" value="SULFURTRANSFERASE-RELATED"/>
    <property type="match status" value="1"/>
</dbReference>
<dbReference type="Pfam" id="PF01171">
    <property type="entry name" value="ATP_bind_3"/>
    <property type="match status" value="1"/>
</dbReference>
<dbReference type="PIRSF" id="PIRSF004976">
    <property type="entry name" value="ATPase_YdaO"/>
    <property type="match status" value="1"/>
</dbReference>
<dbReference type="SUPFAM" id="SSF52402">
    <property type="entry name" value="Adenine nucleotide alpha hydrolases-like"/>
    <property type="match status" value="1"/>
</dbReference>
<reference key="1">
    <citation type="journal article" date="2009" name="PLoS ONE">
        <title>The complete genome of Teredinibacter turnerae T7901: an intracellular endosymbiont of marine wood-boring bivalves (shipworms).</title>
        <authorList>
            <person name="Yang J.C."/>
            <person name="Madupu R."/>
            <person name="Durkin A.S."/>
            <person name="Ekborg N.A."/>
            <person name="Pedamallu C.S."/>
            <person name="Hostetler J.B."/>
            <person name="Radune D."/>
            <person name="Toms B.S."/>
            <person name="Henrissat B."/>
            <person name="Coutinho P.M."/>
            <person name="Schwarz S."/>
            <person name="Field L."/>
            <person name="Trindade-Silva A.E."/>
            <person name="Soares C.A.G."/>
            <person name="Elshahawi S."/>
            <person name="Hanora A."/>
            <person name="Schmidt E.W."/>
            <person name="Haygood M.G."/>
            <person name="Posfai J."/>
            <person name="Benner J."/>
            <person name="Madinger C."/>
            <person name="Nove J."/>
            <person name="Anton B."/>
            <person name="Chaudhary K."/>
            <person name="Foster J."/>
            <person name="Holman A."/>
            <person name="Kumar S."/>
            <person name="Lessard P.A."/>
            <person name="Luyten Y.A."/>
            <person name="Slatko B."/>
            <person name="Wood N."/>
            <person name="Wu B."/>
            <person name="Teplitski M."/>
            <person name="Mougous J.D."/>
            <person name="Ward N."/>
            <person name="Eisen J.A."/>
            <person name="Badger J.H."/>
            <person name="Distel D.L."/>
        </authorList>
    </citation>
    <scope>NUCLEOTIDE SEQUENCE [LARGE SCALE GENOMIC DNA]</scope>
    <source>
        <strain>ATCC 39867 / T7901</strain>
    </source>
</reference>
<protein>
    <recommendedName>
        <fullName evidence="1">tRNA-cytidine(32) 2-sulfurtransferase</fullName>
        <ecNumber evidence="1">2.8.1.-</ecNumber>
    </recommendedName>
    <alternativeName>
        <fullName evidence="1">Two-thiocytidine biosynthesis protein A</fullName>
    </alternativeName>
    <alternativeName>
        <fullName evidence="1">tRNA 2-thiocytidine biosynthesis protein TtcA</fullName>
    </alternativeName>
</protein>
<evidence type="ECO:0000255" key="1">
    <source>
        <dbReference type="HAMAP-Rule" id="MF_01850"/>
    </source>
</evidence>
<gene>
    <name evidence="1" type="primary">ttcA</name>
    <name type="ordered locus">TERTU_1210</name>
</gene>
<name>TTCA_TERTT</name>
<comment type="function">
    <text evidence="1">Catalyzes the ATP-dependent 2-thiolation of cytidine in position 32 of tRNA, to form 2-thiocytidine (s(2)C32). The sulfur atoms are provided by the cysteine/cysteine desulfurase (IscS) system.</text>
</comment>
<comment type="catalytic activity">
    <reaction evidence="1">
        <text>cytidine(32) in tRNA + S-sulfanyl-L-cysteinyl-[cysteine desulfurase] + AH2 + ATP = 2-thiocytidine(32) in tRNA + L-cysteinyl-[cysteine desulfurase] + A + AMP + diphosphate + H(+)</text>
        <dbReference type="Rhea" id="RHEA:57048"/>
        <dbReference type="Rhea" id="RHEA-COMP:10288"/>
        <dbReference type="Rhea" id="RHEA-COMP:12157"/>
        <dbReference type="Rhea" id="RHEA-COMP:12158"/>
        <dbReference type="Rhea" id="RHEA-COMP:14821"/>
        <dbReference type="ChEBI" id="CHEBI:13193"/>
        <dbReference type="ChEBI" id="CHEBI:15378"/>
        <dbReference type="ChEBI" id="CHEBI:17499"/>
        <dbReference type="ChEBI" id="CHEBI:29950"/>
        <dbReference type="ChEBI" id="CHEBI:30616"/>
        <dbReference type="ChEBI" id="CHEBI:33019"/>
        <dbReference type="ChEBI" id="CHEBI:61963"/>
        <dbReference type="ChEBI" id="CHEBI:82748"/>
        <dbReference type="ChEBI" id="CHEBI:141453"/>
        <dbReference type="ChEBI" id="CHEBI:456215"/>
    </reaction>
    <physiologicalReaction direction="left-to-right" evidence="1">
        <dbReference type="Rhea" id="RHEA:57049"/>
    </physiologicalReaction>
</comment>
<comment type="cofactor">
    <cofactor evidence="1">
        <name>Mg(2+)</name>
        <dbReference type="ChEBI" id="CHEBI:18420"/>
    </cofactor>
</comment>
<comment type="cofactor">
    <cofactor evidence="1">
        <name>[4Fe-4S] cluster</name>
        <dbReference type="ChEBI" id="CHEBI:49883"/>
    </cofactor>
    <text evidence="1">Binds 1 [4Fe-4S] cluster per subunit. The cluster is chelated by three Cys residues, the fourth Fe has a free coordination site that may bind a sulfur atom transferred from the persulfide of IscS.</text>
</comment>
<comment type="pathway">
    <text evidence="1">tRNA modification.</text>
</comment>
<comment type="subunit">
    <text evidence="1">Homodimer.</text>
</comment>
<comment type="subcellular location">
    <subcellularLocation>
        <location evidence="1">Cytoplasm</location>
    </subcellularLocation>
</comment>
<comment type="miscellaneous">
    <text evidence="1">The thiolation reaction likely consists of two steps: a first activation step by ATP to form an adenylated intermediate of the target base of tRNA, and a second nucleophilic substitution step of the sulfur (S) atom supplied by the hydrosulfide attached to the Fe-S cluster.</text>
</comment>
<comment type="similarity">
    <text evidence="1">Belongs to the TtcA family.</text>
</comment>
<keyword id="KW-0004">4Fe-4S</keyword>
<keyword id="KW-0067">ATP-binding</keyword>
<keyword id="KW-0963">Cytoplasm</keyword>
<keyword id="KW-0408">Iron</keyword>
<keyword id="KW-0411">Iron-sulfur</keyword>
<keyword id="KW-0460">Magnesium</keyword>
<keyword id="KW-0479">Metal-binding</keyword>
<keyword id="KW-0547">Nucleotide-binding</keyword>
<keyword id="KW-1185">Reference proteome</keyword>
<keyword id="KW-0694">RNA-binding</keyword>
<keyword id="KW-0808">Transferase</keyword>
<keyword id="KW-0819">tRNA processing</keyword>
<keyword id="KW-0820">tRNA-binding</keyword>